<dbReference type="EMBL" id="D00679">
    <property type="protein sequence ID" value="BAA00586.1"/>
    <property type="molecule type" value="mRNA"/>
</dbReference>
<dbReference type="EMBL" id="D00646">
    <property type="protein sequence ID" value="BAA00542.1"/>
    <property type="molecule type" value="mRNA"/>
</dbReference>
<dbReference type="PIR" id="I51559">
    <property type="entry name" value="I51559"/>
</dbReference>
<dbReference type="RefSeq" id="NP_001081229.1">
    <property type="nucleotide sequence ID" value="NM_001087760.1"/>
</dbReference>
<dbReference type="SMR" id="P25183"/>
<dbReference type="BioGRID" id="99062">
    <property type="interactions" value="1"/>
</dbReference>
<dbReference type="DNASU" id="397722"/>
<dbReference type="GeneID" id="397722"/>
<dbReference type="KEGG" id="xla:397722"/>
<dbReference type="AGR" id="Xenbase:XB-GENE-6252622"/>
<dbReference type="CTD" id="397722"/>
<dbReference type="Xenbase" id="XB-GENE-6252622">
    <property type="gene designation" value="rcc1.L"/>
</dbReference>
<dbReference type="OrthoDB" id="61110at2759"/>
<dbReference type="Proteomes" id="UP000186698">
    <property type="component" value="Chromosome 2L"/>
</dbReference>
<dbReference type="Bgee" id="397722">
    <property type="expression patterns" value="Expressed in blastula and 19 other cell types or tissues"/>
</dbReference>
<dbReference type="GO" id="GO:0005694">
    <property type="term" value="C:chromosome"/>
    <property type="evidence" value="ECO:0007669"/>
    <property type="project" value="UniProtKB-SubCell"/>
</dbReference>
<dbReference type="GO" id="GO:0005737">
    <property type="term" value="C:cytoplasm"/>
    <property type="evidence" value="ECO:0000318"/>
    <property type="project" value="GO_Central"/>
</dbReference>
<dbReference type="GO" id="GO:0005634">
    <property type="term" value="C:nucleus"/>
    <property type="evidence" value="ECO:0007669"/>
    <property type="project" value="UniProtKB-SubCell"/>
</dbReference>
<dbReference type="GO" id="GO:0005085">
    <property type="term" value="F:guanyl-nucleotide exchange factor activity"/>
    <property type="evidence" value="ECO:0000318"/>
    <property type="project" value="GO_Central"/>
</dbReference>
<dbReference type="GO" id="GO:0051301">
    <property type="term" value="P:cell division"/>
    <property type="evidence" value="ECO:0007669"/>
    <property type="project" value="UniProtKB-KW"/>
</dbReference>
<dbReference type="GO" id="GO:0007346">
    <property type="term" value="P:regulation of mitotic cell cycle"/>
    <property type="evidence" value="ECO:0000318"/>
    <property type="project" value="GO_Central"/>
</dbReference>
<dbReference type="GO" id="GO:1901673">
    <property type="term" value="P:regulation of mitotic spindle assembly"/>
    <property type="evidence" value="ECO:0000318"/>
    <property type="project" value="GO_Central"/>
</dbReference>
<dbReference type="Gene3D" id="2.130.10.30">
    <property type="entry name" value="Regulator of chromosome condensation 1/beta-lactamase-inhibitor protein II"/>
    <property type="match status" value="1"/>
</dbReference>
<dbReference type="InterPro" id="IPR051553">
    <property type="entry name" value="Ran_GTPase-activating"/>
</dbReference>
<dbReference type="InterPro" id="IPR009091">
    <property type="entry name" value="RCC1/BLIP-II"/>
</dbReference>
<dbReference type="InterPro" id="IPR000408">
    <property type="entry name" value="Reg_chr_condens"/>
</dbReference>
<dbReference type="PANTHER" id="PTHR45982">
    <property type="entry name" value="REGULATOR OF CHROMOSOME CONDENSATION"/>
    <property type="match status" value="1"/>
</dbReference>
<dbReference type="PANTHER" id="PTHR45982:SF9">
    <property type="entry name" value="REGULATOR OF CHROMOSOME CONDENSATION"/>
    <property type="match status" value="1"/>
</dbReference>
<dbReference type="Pfam" id="PF25390">
    <property type="entry name" value="WD40_RLD"/>
    <property type="match status" value="1"/>
</dbReference>
<dbReference type="PRINTS" id="PR00633">
    <property type="entry name" value="RCCNDNSATION"/>
</dbReference>
<dbReference type="SUPFAM" id="SSF50985">
    <property type="entry name" value="RCC1/BLIP-II"/>
    <property type="match status" value="1"/>
</dbReference>
<dbReference type="PROSITE" id="PS00625">
    <property type="entry name" value="RCC1_1"/>
    <property type="match status" value="1"/>
</dbReference>
<dbReference type="PROSITE" id="PS00626">
    <property type="entry name" value="RCC1_2"/>
    <property type="match status" value="5"/>
</dbReference>
<dbReference type="PROSITE" id="PS50012">
    <property type="entry name" value="RCC1_3"/>
    <property type="match status" value="7"/>
</dbReference>
<sequence>MKGKKTLKRTIAAEESNGTSDVKKTKALPIVTHPSHGTVGGQVLTLGQGDVGQLGLGEDIMERKKPALVTLTEDIVQAAAGGMHTVCLGASGSIYTFGCNDEGALGRDTSEEGSEMQPGKVELAEKVVQVSAGDSHTAALTEDGRVFVFGSFRDNNGVIGLLEPMKKSMVPVQVQINTPVIKIASGNDHLVLLTVDGDLYTSGCGEQGQLGRVPERFTNRGGRKGLERLLVPQCIHLKAKGSGRVHFQDVFCGAYFTFAVSQEGHVYGFGLSNYHQLGTKNTQACYAPQNLTSFKNSTKSWIGFSGGQHHTVCVDSEGKAYSLGRAEYGRLGLGENAEEQSEPTPIPDLPKINSVASGASVSYAVSTDGCVFAWGMGTNLQLGTGEEEDVWSPEQMTGKHLEDREVLSVSSGGQHTVLLVRKRS</sequence>
<gene>
    <name type="primary">rcc1</name>
</gene>
<evidence type="ECO:0000250" key="1">
    <source>
        <dbReference type="UniProtKB" id="P18754"/>
    </source>
</evidence>
<evidence type="ECO:0000256" key="2">
    <source>
        <dbReference type="SAM" id="MobiDB-lite"/>
    </source>
</evidence>
<evidence type="ECO:0000269" key="3">
    <source>
    </source>
</evidence>
<accession>P25183</accession>
<protein>
    <recommendedName>
        <fullName>Regulator of chromosome condensation</fullName>
    </recommendedName>
</protein>
<comment type="function">
    <text evidence="1 3">Guanine-nucleotide releasing factor that promotes the exchange of Ran-bound GDP by GTP, and thereby plays an important role in RAN-mediated functions in nuclear import and mitosis. Contributes to the generation of high levels of chromosome-associated, GTP-bound RAN, which is important for mitotic spindle assembly and normal progress through mitosis. Via its role in maintaining high levels of GTP-bound RAN in the nucleus, contributes to the release of cargo proteins from importins after nuclear import (By similarity). Involved in the regulation of onset of chromosome condensation in the S phase (PubMed:2361953). Binds both to the nucleosomes and double-stranded DNA (By similarity).</text>
</comment>
<comment type="subcellular location">
    <subcellularLocation>
        <location evidence="1">Nucleus</location>
    </subcellularLocation>
    <subcellularLocation>
        <location evidence="1">Chromosome</location>
    </subcellularLocation>
    <subcellularLocation>
        <location evidence="1">Cytoplasm</location>
    </subcellularLocation>
    <text evidence="1">Predominantly nuclear in interphase cells. Binds to mitotic chromosomes.</text>
</comment>
<name>RCC1_XENLA</name>
<feature type="chain" id="PRO_0000206631" description="Regulator of chromosome condensation">
    <location>
        <begin position="1"/>
        <end position="424"/>
    </location>
</feature>
<feature type="repeat" description="RCC1 1">
    <location>
        <begin position="40"/>
        <end position="90"/>
    </location>
</feature>
<feature type="repeat" description="RCC1 2">
    <location>
        <begin position="91"/>
        <end position="142"/>
    </location>
</feature>
<feature type="repeat" description="RCC1 3">
    <location>
        <begin position="144"/>
        <end position="195"/>
    </location>
</feature>
<feature type="repeat" description="RCC1 4">
    <location>
        <begin position="197"/>
        <end position="262"/>
    </location>
</feature>
<feature type="repeat" description="RCC1 5">
    <location>
        <begin position="263"/>
        <end position="316"/>
    </location>
</feature>
<feature type="repeat" description="RCC1 6">
    <location>
        <begin position="317"/>
        <end position="367"/>
    </location>
</feature>
<feature type="repeat" description="RCC1 7">
    <location>
        <begin position="368"/>
        <end position="421"/>
    </location>
</feature>
<feature type="region of interest" description="Disordered" evidence="2">
    <location>
        <begin position="1"/>
        <end position="22"/>
    </location>
</feature>
<feature type="sequence variant" description="In clone lambda O-23.">
    <location>
        <begin position="27"/>
        <end position="30"/>
    </location>
</feature>
<keyword id="KW-0131">Cell cycle</keyword>
<keyword id="KW-0132">Cell division</keyword>
<keyword id="KW-0158">Chromosome</keyword>
<keyword id="KW-0963">Cytoplasm</keyword>
<keyword id="KW-0344">Guanine-nucleotide releasing factor</keyword>
<keyword id="KW-0498">Mitosis</keyword>
<keyword id="KW-0539">Nucleus</keyword>
<keyword id="KW-1185">Reference proteome</keyword>
<keyword id="KW-0677">Repeat</keyword>
<proteinExistence type="evidence at transcript level"/>
<organism>
    <name type="scientific">Xenopus laevis</name>
    <name type="common">African clawed frog</name>
    <dbReference type="NCBI Taxonomy" id="8355"/>
    <lineage>
        <taxon>Eukaryota</taxon>
        <taxon>Metazoa</taxon>
        <taxon>Chordata</taxon>
        <taxon>Craniata</taxon>
        <taxon>Vertebrata</taxon>
        <taxon>Euteleostomi</taxon>
        <taxon>Amphibia</taxon>
        <taxon>Batrachia</taxon>
        <taxon>Anura</taxon>
        <taxon>Pipoidea</taxon>
        <taxon>Pipidae</taxon>
        <taxon>Xenopodinae</taxon>
        <taxon>Xenopus</taxon>
        <taxon>Xenopus</taxon>
    </lineage>
</organism>
<reference key="1">
    <citation type="journal article" date="1990" name="J. Biochem.">
        <title>Cloning of Xenopus RCC1 cDNA, a homolog of the human RCC1 gene: complementation of tsBN2 mutation and identification of the product.</title>
        <authorList>
            <person name="Nishitani H."/>
            <person name="Kobayashi H."/>
            <person name="Ohtsubo M."/>
            <person name="Nishimoto T."/>
        </authorList>
    </citation>
    <scope>NUCLEOTIDE SEQUENCE [MRNA]</scope>
    <scope>FUNCTION</scope>
</reference>